<protein>
    <recommendedName>
        <fullName evidence="1">Ribosome maturation factor RimM</fullName>
    </recommendedName>
</protein>
<dbReference type="EMBL" id="CP000243">
    <property type="protein sequence ID" value="ABE08397.1"/>
    <property type="status" value="ALT_INIT"/>
    <property type="molecule type" value="Genomic_DNA"/>
</dbReference>
<dbReference type="RefSeq" id="WP_000043335.1">
    <property type="nucleotide sequence ID" value="NZ_CP064825.1"/>
</dbReference>
<dbReference type="SMR" id="Q1R8B7"/>
<dbReference type="GeneID" id="93774458"/>
<dbReference type="KEGG" id="eci:UTI89_C2941"/>
<dbReference type="HOGENOM" id="CLU_077636_1_0_6"/>
<dbReference type="Proteomes" id="UP000001952">
    <property type="component" value="Chromosome"/>
</dbReference>
<dbReference type="GO" id="GO:0005737">
    <property type="term" value="C:cytoplasm"/>
    <property type="evidence" value="ECO:0007669"/>
    <property type="project" value="UniProtKB-SubCell"/>
</dbReference>
<dbReference type="GO" id="GO:0005840">
    <property type="term" value="C:ribosome"/>
    <property type="evidence" value="ECO:0007669"/>
    <property type="project" value="InterPro"/>
</dbReference>
<dbReference type="GO" id="GO:0043022">
    <property type="term" value="F:ribosome binding"/>
    <property type="evidence" value="ECO:0007669"/>
    <property type="project" value="InterPro"/>
</dbReference>
<dbReference type="GO" id="GO:0042274">
    <property type="term" value="P:ribosomal small subunit biogenesis"/>
    <property type="evidence" value="ECO:0007669"/>
    <property type="project" value="UniProtKB-UniRule"/>
</dbReference>
<dbReference type="GO" id="GO:0006364">
    <property type="term" value="P:rRNA processing"/>
    <property type="evidence" value="ECO:0007669"/>
    <property type="project" value="UniProtKB-UniRule"/>
</dbReference>
<dbReference type="FunFam" id="2.30.30.240:FF:000001">
    <property type="entry name" value="Ribosome maturation factor RimM"/>
    <property type="match status" value="1"/>
</dbReference>
<dbReference type="FunFam" id="2.40.30.60:FF:000001">
    <property type="entry name" value="Ribosome maturation factor RimM"/>
    <property type="match status" value="1"/>
</dbReference>
<dbReference type="Gene3D" id="2.30.30.240">
    <property type="entry name" value="PRC-barrel domain"/>
    <property type="match status" value="1"/>
</dbReference>
<dbReference type="Gene3D" id="2.40.30.60">
    <property type="entry name" value="RimM"/>
    <property type="match status" value="1"/>
</dbReference>
<dbReference type="HAMAP" id="MF_00014">
    <property type="entry name" value="Ribosome_mat_RimM"/>
    <property type="match status" value="1"/>
</dbReference>
<dbReference type="InterPro" id="IPR011033">
    <property type="entry name" value="PRC_barrel-like_sf"/>
</dbReference>
<dbReference type="InterPro" id="IPR056792">
    <property type="entry name" value="PRC_RimM"/>
</dbReference>
<dbReference type="InterPro" id="IPR011961">
    <property type="entry name" value="RimM"/>
</dbReference>
<dbReference type="InterPro" id="IPR002676">
    <property type="entry name" value="RimM_N"/>
</dbReference>
<dbReference type="InterPro" id="IPR036976">
    <property type="entry name" value="RimM_N_sf"/>
</dbReference>
<dbReference type="InterPro" id="IPR009000">
    <property type="entry name" value="Transl_B-barrel_sf"/>
</dbReference>
<dbReference type="NCBIfam" id="TIGR02273">
    <property type="entry name" value="16S_RimM"/>
    <property type="match status" value="1"/>
</dbReference>
<dbReference type="PANTHER" id="PTHR33692">
    <property type="entry name" value="RIBOSOME MATURATION FACTOR RIMM"/>
    <property type="match status" value="1"/>
</dbReference>
<dbReference type="PANTHER" id="PTHR33692:SF1">
    <property type="entry name" value="RIBOSOME MATURATION FACTOR RIMM"/>
    <property type="match status" value="1"/>
</dbReference>
<dbReference type="Pfam" id="PF24986">
    <property type="entry name" value="PRC_RimM"/>
    <property type="match status" value="1"/>
</dbReference>
<dbReference type="Pfam" id="PF01782">
    <property type="entry name" value="RimM"/>
    <property type="match status" value="1"/>
</dbReference>
<dbReference type="SUPFAM" id="SSF50346">
    <property type="entry name" value="PRC-barrel domain"/>
    <property type="match status" value="1"/>
</dbReference>
<dbReference type="SUPFAM" id="SSF50447">
    <property type="entry name" value="Translation proteins"/>
    <property type="match status" value="1"/>
</dbReference>
<accession>Q1R8B7</accession>
<name>RIMM_ECOUT</name>
<gene>
    <name evidence="1" type="primary">rimM</name>
    <name type="ordered locus">UTI89_C2941</name>
</gene>
<reference key="1">
    <citation type="journal article" date="2006" name="Proc. Natl. Acad. Sci. U.S.A.">
        <title>Identification of genes subject to positive selection in uropathogenic strains of Escherichia coli: a comparative genomics approach.</title>
        <authorList>
            <person name="Chen S.L."/>
            <person name="Hung C.-S."/>
            <person name="Xu J."/>
            <person name="Reigstad C.S."/>
            <person name="Magrini V."/>
            <person name="Sabo A."/>
            <person name="Blasiar D."/>
            <person name="Bieri T."/>
            <person name="Meyer R.R."/>
            <person name="Ozersky P."/>
            <person name="Armstrong J.R."/>
            <person name="Fulton R.S."/>
            <person name="Latreille J.P."/>
            <person name="Spieth J."/>
            <person name="Hooton T.M."/>
            <person name="Mardis E.R."/>
            <person name="Hultgren S.J."/>
            <person name="Gordon J.I."/>
        </authorList>
    </citation>
    <scope>NUCLEOTIDE SEQUENCE [LARGE SCALE GENOMIC DNA]</scope>
    <source>
        <strain>UTI89 / UPEC</strain>
    </source>
</reference>
<sequence>MSKQLTAQAPVDPIVLGKMGSSYGIRGWLRVFSSTEDAESIFDYQPWFIQKAGQWQQVQLESWKHHNQDMIIKLKGVDDRDAANLLTNCEIVVDSSQLPQLEEGDYYWKDLMGCQVVTTEGYDLGKVVDMMETGSNDVLVIKANLKDAFGIKERLVPFLDGQVIKKVDLTTRSIEVDWDPGF</sequence>
<feature type="chain" id="PRO_0000351757" description="Ribosome maturation factor RimM">
    <location>
        <begin position="1"/>
        <end position="182"/>
    </location>
</feature>
<feature type="domain" description="PRC barrel" evidence="1">
    <location>
        <begin position="103"/>
        <end position="182"/>
    </location>
</feature>
<keyword id="KW-0143">Chaperone</keyword>
<keyword id="KW-0963">Cytoplasm</keyword>
<keyword id="KW-0690">Ribosome biogenesis</keyword>
<keyword id="KW-0698">rRNA processing</keyword>
<organism>
    <name type="scientific">Escherichia coli (strain UTI89 / UPEC)</name>
    <dbReference type="NCBI Taxonomy" id="364106"/>
    <lineage>
        <taxon>Bacteria</taxon>
        <taxon>Pseudomonadati</taxon>
        <taxon>Pseudomonadota</taxon>
        <taxon>Gammaproteobacteria</taxon>
        <taxon>Enterobacterales</taxon>
        <taxon>Enterobacteriaceae</taxon>
        <taxon>Escherichia</taxon>
    </lineage>
</organism>
<comment type="function">
    <text evidence="1">An accessory protein needed during the final step in the assembly of 30S ribosomal subunit, possibly for assembly of the head region. Essential for efficient processing of 16S rRNA. May be needed both before and after RbfA during the maturation of 16S rRNA. It has affinity for free ribosomal 30S subunits but not for 70S ribosomes.</text>
</comment>
<comment type="subunit">
    <text evidence="1">Binds ribosomal protein uS19.</text>
</comment>
<comment type="subcellular location">
    <subcellularLocation>
        <location evidence="1">Cytoplasm</location>
    </subcellularLocation>
</comment>
<comment type="domain">
    <text evidence="1">The PRC barrel domain binds ribosomal protein uS19.</text>
</comment>
<comment type="similarity">
    <text evidence="1">Belongs to the RimM family.</text>
</comment>
<comment type="sequence caution" evidence="2">
    <conflict type="erroneous initiation">
        <sequence resource="EMBL-CDS" id="ABE08397"/>
    </conflict>
</comment>
<evidence type="ECO:0000255" key="1">
    <source>
        <dbReference type="HAMAP-Rule" id="MF_00014"/>
    </source>
</evidence>
<evidence type="ECO:0000305" key="2"/>
<proteinExistence type="inferred from homology"/>